<reference key="1">
    <citation type="journal article" date="1989" name="J. Bacteriol.">
        <title>Nucleotide sequence of the FNR-regulated fumarase gene (fumB) of Escherichia coli K-12.</title>
        <authorList>
            <person name="Bell P.J."/>
            <person name="Andrews S.C."/>
            <person name="Sivak M.N."/>
            <person name="Guest J.R."/>
        </authorList>
    </citation>
    <scope>NUCLEOTIDE SEQUENCE [GENOMIC DNA]</scope>
    <source>
        <strain>K12</strain>
    </source>
</reference>
<reference key="2">
    <citation type="journal article" date="1995" name="Nucleic Acids Res.">
        <title>Analysis of the Escherichia coli genome VI: DNA sequence of the region from 92.8 through 100 minutes.</title>
        <authorList>
            <person name="Burland V.D."/>
            <person name="Plunkett G. III"/>
            <person name="Sofia H.J."/>
            <person name="Daniels D.L."/>
            <person name="Blattner F.R."/>
        </authorList>
    </citation>
    <scope>NUCLEOTIDE SEQUENCE [LARGE SCALE GENOMIC DNA]</scope>
    <source>
        <strain>K12 / MG1655 / ATCC 47076</strain>
    </source>
</reference>
<reference key="3">
    <citation type="journal article" date="1997" name="Science">
        <title>The complete genome sequence of Escherichia coli K-12.</title>
        <authorList>
            <person name="Blattner F.R."/>
            <person name="Plunkett G. III"/>
            <person name="Bloch C.A."/>
            <person name="Perna N.T."/>
            <person name="Burland V."/>
            <person name="Riley M."/>
            <person name="Collado-Vides J."/>
            <person name="Glasner J.D."/>
            <person name="Rode C.K."/>
            <person name="Mayhew G.F."/>
            <person name="Gregor J."/>
            <person name="Davis N.W."/>
            <person name="Kirkpatrick H.A."/>
            <person name="Goeden M.A."/>
            <person name="Rose D.J."/>
            <person name="Mau B."/>
            <person name="Shao Y."/>
        </authorList>
    </citation>
    <scope>NUCLEOTIDE SEQUENCE [LARGE SCALE GENOMIC DNA]</scope>
    <scope>SEQUENCE REVISION TO 50</scope>
    <source>
        <strain>K12 / MG1655 / ATCC 47076</strain>
    </source>
</reference>
<reference key="4">
    <citation type="journal article" date="2006" name="Mol. Syst. Biol.">
        <title>Highly accurate genome sequences of Escherichia coli K-12 strains MG1655 and W3110.</title>
        <authorList>
            <person name="Hayashi K."/>
            <person name="Morooka N."/>
            <person name="Yamamoto Y."/>
            <person name="Fujita K."/>
            <person name="Isono K."/>
            <person name="Choi S."/>
            <person name="Ohtsubo E."/>
            <person name="Baba T."/>
            <person name="Wanner B.L."/>
            <person name="Mori H."/>
            <person name="Horiuchi T."/>
        </authorList>
    </citation>
    <scope>NUCLEOTIDE SEQUENCE [LARGE SCALE GENOMIC DNA]</scope>
    <source>
        <strain>K12 / W3110 / ATCC 27325 / DSM 5911</strain>
    </source>
</reference>
<reference key="5">
    <citation type="journal article" date="1985" name="J. Gen. Microbiol.">
        <title>The fumarase genes of Escherichia coli: location of the fumB gene and discovery of a new gene (fumC).</title>
        <authorList>
            <person name="Guest J.R."/>
            <person name="Miles J.S."/>
            <person name="Roberts R.E."/>
            <person name="Woods S.A."/>
        </authorList>
    </citation>
    <scope>IDENTIFICATION OF THE STRUCTURAL GENE</scope>
</reference>
<reference key="6">
    <citation type="journal article" date="1987" name="FEMS Microbiol. Lett.">
        <title>Differential roles of the Escherichia coli fumarases and fnr-dependent expression of fumarase B and aspartase.</title>
        <authorList>
            <person name="Woods S.A."/>
            <person name="Guest J.R."/>
        </authorList>
    </citation>
    <scope>FUNCTION</scope>
    <scope>INDUCTION</scope>
</reference>
<reference key="7">
    <citation type="journal article" date="1988" name="Biochim. Biophys. Acta">
        <title>Two biochemically distinct classes of fumarase in Escherichia coli.</title>
        <authorList>
            <person name="Woods S.A."/>
            <person name="Shwartzbach S.D."/>
            <person name="Guest J.R."/>
        </authorList>
    </citation>
    <scope>FUNCTION</scope>
    <scope>SUBUNIT</scope>
    <source>
        <strain>K12</strain>
    </source>
</reference>
<reference key="8">
    <citation type="journal article" date="2009" name="Mol. Cell. Proteomics">
        <title>Lysine acetylation is a highly abundant and evolutionarily conserved modification in Escherichia coli.</title>
        <authorList>
            <person name="Zhang J."/>
            <person name="Sprung R."/>
            <person name="Pei J."/>
            <person name="Tan X."/>
            <person name="Kim S."/>
            <person name="Zhu H."/>
            <person name="Liu C.F."/>
            <person name="Grishin N.V."/>
            <person name="Zhao Y."/>
        </authorList>
    </citation>
    <scope>ACETYLATION [LARGE SCALE ANALYSIS] AT LYS-192</scope>
    <scope>IDENTIFICATION BY MASS SPECTROMETRY</scope>
    <source>
        <strain>K12 / JW1106</strain>
        <strain>K12 / MG1655 / ATCC 47076</strain>
    </source>
</reference>
<reference key="9">
    <citation type="journal article" date="2007" name="Arch. Microbiol.">
        <title>Anaerobic growth of Escherichia coli on D-tartrate depends on the fumarate carrier DcuB and fumarase, rather than the L-tartrate carrier TtdT and L-tartrate dehydratase.</title>
        <authorList>
            <person name="Kim O.B."/>
            <person name="Lux S."/>
            <person name="Unden G."/>
        </authorList>
    </citation>
    <scope>FUNCTION</scope>
    <scope>DISRUPTION PHENOTYPE</scope>
</reference>
<reference key="10">
    <citation type="journal article" date="2013" name="PLoS ONE">
        <title>Biochemical similarities and differences between the catalytic [4Fe-4S] cluster containing fumarases FumA and FumB from Escherichia coli.</title>
        <authorList>
            <person name="van Vugt-Lussenburg B.M."/>
            <person name="van der Weel L."/>
            <person name="Hagen W.R."/>
            <person name="Hagedoorn P.L."/>
        </authorList>
    </citation>
    <scope>FUNCTION</scope>
    <scope>CATALYTIC ACTIVITY</scope>
    <scope>COFACTOR</scope>
    <scope>SUBSTRATE SPECIFICITY</scope>
    <scope>BIOPHYSICOCHEMICAL PROPERTIES</scope>
    <scope>SUBUNIT</scope>
    <source>
        <strain>K12</strain>
    </source>
</reference>
<keyword id="KW-0004">4Fe-4S</keyword>
<keyword id="KW-0007">Acetylation</keyword>
<keyword id="KW-0408">Iron</keyword>
<keyword id="KW-0411">Iron-sulfur</keyword>
<keyword id="KW-0456">Lyase</keyword>
<keyword id="KW-0479">Metal-binding</keyword>
<keyword id="KW-1185">Reference proteome</keyword>
<accession>P14407</accession>
<accession>P78139</accession>
<accession>Q2M6I2</accession>
<protein>
    <recommendedName>
        <fullName evidence="9">Fumarate hydratase class I, anaerobic</fullName>
        <ecNumber evidence="4">4.2.1.2</ecNumber>
    </recommendedName>
    <alternativeName>
        <fullName evidence="7">D-tartrate dehydratase</fullName>
        <ecNumber evidence="4">4.2.1.81</ecNumber>
    </alternativeName>
    <alternativeName>
        <fullName evidence="7">Fumarase B</fullName>
    </alternativeName>
</protein>
<evidence type="ECO:0000250" key="1">
    <source>
        <dbReference type="UniProtKB" id="E9AE57"/>
    </source>
</evidence>
<evidence type="ECO:0000269" key="2">
    <source>
    </source>
</evidence>
<evidence type="ECO:0000269" key="3">
    <source>
    </source>
</evidence>
<evidence type="ECO:0000269" key="4">
    <source>
    </source>
</evidence>
<evidence type="ECO:0000269" key="5">
    <source>
    </source>
</evidence>
<evidence type="ECO:0000269" key="6">
    <source ref="6"/>
</evidence>
<evidence type="ECO:0000303" key="7">
    <source>
    </source>
</evidence>
<evidence type="ECO:0000303" key="8">
    <source>
    </source>
</evidence>
<evidence type="ECO:0000303" key="9">
    <source>
    </source>
</evidence>
<evidence type="ECO:0000305" key="10"/>
<proteinExistence type="evidence at protein level"/>
<sequence length="548" mass="60105">MSNKPFIYQAPFPMGKDNTEYYLLTSDYVSVADFDGETILKVEPEALTLLAQQAFHDASFMLRPAHQKQVAAILHDPEASENDKYVALQFLRNSEIAAKGVLPTCQDTGTAIIVGKKGQRVWTGGGDEETLSKGVYNTYIEDNLRYSQNAALDMYKEVNTGTNLPAQIDLYAVDGDEYKFLCVAKGGGSANKTYLYQETKALLTPGKLKNFLVEKMRTLGTAACPPYHIAFVIGGTSAETNLKTVKLASAHYYDELPTEGNEHGQAFRDVQLEQELLEEAQKLGLGAQFGGKYFAHDIRVIRLPRHGASCPVGMGVSCSADRNIKAKINREGIWIEKLEHNPGQYIPQELRQAGEGEAVKVDLNRPMKEILAQLSQYPVSTRLSLTGTIIVGRDIAHAKLKELIDAGKELPQYIKDHPIYYAGPAKTPAGYPSGSLGPTTAGRMDSYVDLLQSHGGSMIMLAKGNRSQQVTDACHKHGGFYLGSIGGPAAVLAQQSIKHLECVAYPELGMEAIWKIEVEDFPAFILVDDKGNDFFQQIVNKQCANCTK</sequence>
<dbReference type="EC" id="4.2.1.2" evidence="4"/>
<dbReference type="EC" id="4.2.1.81" evidence="4"/>
<dbReference type="EMBL" id="M27058">
    <property type="protein sequence ID" value="AAA23827.1"/>
    <property type="molecule type" value="Genomic_DNA"/>
</dbReference>
<dbReference type="EMBL" id="U14003">
    <property type="protein sequence ID" value="AAA97022.1"/>
    <property type="molecule type" value="Genomic_DNA"/>
</dbReference>
<dbReference type="EMBL" id="U00096">
    <property type="protein sequence ID" value="AAC77083.1"/>
    <property type="molecule type" value="Genomic_DNA"/>
</dbReference>
<dbReference type="EMBL" id="AP009048">
    <property type="protein sequence ID" value="BAE78124.1"/>
    <property type="molecule type" value="Genomic_DNA"/>
</dbReference>
<dbReference type="PIR" id="A65222">
    <property type="entry name" value="B44511"/>
</dbReference>
<dbReference type="RefSeq" id="NP_418546.1">
    <property type="nucleotide sequence ID" value="NC_000913.3"/>
</dbReference>
<dbReference type="RefSeq" id="WP_000066707.1">
    <property type="nucleotide sequence ID" value="NZ_SSZK01000018.1"/>
</dbReference>
<dbReference type="SMR" id="P14407"/>
<dbReference type="BioGRID" id="4262150">
    <property type="interactions" value="17"/>
</dbReference>
<dbReference type="FunCoup" id="P14407">
    <property type="interactions" value="193"/>
</dbReference>
<dbReference type="IntAct" id="P14407">
    <property type="interactions" value="6"/>
</dbReference>
<dbReference type="STRING" id="511145.b4122"/>
<dbReference type="iPTMnet" id="P14407"/>
<dbReference type="jPOST" id="P14407"/>
<dbReference type="PaxDb" id="511145-b4122"/>
<dbReference type="EnsemblBacteria" id="AAC77083">
    <property type="protein sequence ID" value="AAC77083"/>
    <property type="gene ID" value="b4122"/>
</dbReference>
<dbReference type="GeneID" id="948642"/>
<dbReference type="KEGG" id="ecj:JW4083"/>
<dbReference type="KEGG" id="eco:b4122"/>
<dbReference type="KEGG" id="ecoc:C3026_22275"/>
<dbReference type="PATRIC" id="fig|1411691.4.peg.2578"/>
<dbReference type="EchoBASE" id="EB0352"/>
<dbReference type="eggNOG" id="COG1838">
    <property type="taxonomic scope" value="Bacteria"/>
</dbReference>
<dbReference type="eggNOG" id="COG1951">
    <property type="taxonomic scope" value="Bacteria"/>
</dbReference>
<dbReference type="HOGENOM" id="CLU_026758_0_0_6"/>
<dbReference type="InParanoid" id="P14407"/>
<dbReference type="OMA" id="SMYDEKN"/>
<dbReference type="OrthoDB" id="9798978at2"/>
<dbReference type="PhylomeDB" id="P14407"/>
<dbReference type="BioCyc" id="EcoCyc:FUMB-MONOMER"/>
<dbReference type="BioCyc" id="MetaCyc:FUMB-MONOMER"/>
<dbReference type="BRENDA" id="4.2.1.2">
    <property type="organism ID" value="2026"/>
</dbReference>
<dbReference type="BRENDA" id="4.2.1.34">
    <property type="organism ID" value="2026"/>
</dbReference>
<dbReference type="SABIO-RK" id="P14407"/>
<dbReference type="PRO" id="PR:P14407"/>
<dbReference type="Proteomes" id="UP000000625">
    <property type="component" value="Chromosome"/>
</dbReference>
<dbReference type="GO" id="GO:0005829">
    <property type="term" value="C:cytosol"/>
    <property type="evidence" value="ECO:0007005"/>
    <property type="project" value="UniProtKB"/>
</dbReference>
<dbReference type="GO" id="GO:0051539">
    <property type="term" value="F:4 iron, 4 sulfur cluster binding"/>
    <property type="evidence" value="ECO:0000314"/>
    <property type="project" value="EcoCyc"/>
</dbReference>
<dbReference type="GO" id="GO:0047808">
    <property type="term" value="F:D(-)-tartrate dehydratase activity"/>
    <property type="evidence" value="ECO:0000314"/>
    <property type="project" value="EcoCyc"/>
</dbReference>
<dbReference type="GO" id="GO:0004333">
    <property type="term" value="F:fumarate hydratase activity"/>
    <property type="evidence" value="ECO:0000314"/>
    <property type="project" value="EcoCyc"/>
</dbReference>
<dbReference type="GO" id="GO:0046872">
    <property type="term" value="F:metal ion binding"/>
    <property type="evidence" value="ECO:0007669"/>
    <property type="project" value="UniProtKB-KW"/>
</dbReference>
<dbReference type="GO" id="GO:0042803">
    <property type="term" value="F:protein homodimerization activity"/>
    <property type="evidence" value="ECO:0000314"/>
    <property type="project" value="EcoCyc"/>
</dbReference>
<dbReference type="GO" id="GO:0006974">
    <property type="term" value="P:DNA damage response"/>
    <property type="evidence" value="ECO:0000270"/>
    <property type="project" value="EcoliWiki"/>
</dbReference>
<dbReference type="GO" id="GO:0044010">
    <property type="term" value="P:single-species biofilm formation"/>
    <property type="evidence" value="ECO:0000315"/>
    <property type="project" value="EcoCyc"/>
</dbReference>
<dbReference type="GO" id="GO:0006099">
    <property type="term" value="P:tricarboxylic acid cycle"/>
    <property type="evidence" value="ECO:0000316"/>
    <property type="project" value="EcoCyc"/>
</dbReference>
<dbReference type="FunFam" id="3.20.130.10:FF:000001">
    <property type="entry name" value="Fumarate hydratase class I"/>
    <property type="match status" value="1"/>
</dbReference>
<dbReference type="Gene3D" id="3.20.130.10">
    <property type="entry name" value="Fe-S hydro-lyase, tartrate dehydratase beta-type, catalytic domain"/>
    <property type="match status" value="1"/>
</dbReference>
<dbReference type="InterPro" id="IPR051208">
    <property type="entry name" value="Class-I_Fumarase/Tartrate_DH"/>
</dbReference>
<dbReference type="InterPro" id="IPR004646">
    <property type="entry name" value="Fe-S_hydro-lyase_TtdA-typ_cat"/>
</dbReference>
<dbReference type="InterPro" id="IPR004647">
    <property type="entry name" value="Fe-S_hydro-lyase_TtdB-typ_cat"/>
</dbReference>
<dbReference type="InterPro" id="IPR036660">
    <property type="entry name" value="Fe-S_hydroAse_TtdB_cat_sf"/>
</dbReference>
<dbReference type="InterPro" id="IPR011167">
    <property type="entry name" value="Fe_dep_fumarate_hydratase"/>
</dbReference>
<dbReference type="InterPro" id="IPR020557">
    <property type="entry name" value="Fumarate_lyase_CS"/>
</dbReference>
<dbReference type="NCBIfam" id="NF011919">
    <property type="entry name" value="PRK15390.1"/>
    <property type="match status" value="1"/>
</dbReference>
<dbReference type="NCBIfam" id="NF011920">
    <property type="entry name" value="PRK15391.1"/>
    <property type="match status" value="1"/>
</dbReference>
<dbReference type="NCBIfam" id="TIGR00722">
    <property type="entry name" value="ttdA_fumA_fumB"/>
    <property type="match status" value="1"/>
</dbReference>
<dbReference type="NCBIfam" id="TIGR00723">
    <property type="entry name" value="ttdB_fumA_fumB"/>
    <property type="match status" value="1"/>
</dbReference>
<dbReference type="PANTHER" id="PTHR30389:SF18">
    <property type="entry name" value="FUMARATE HYDRATASE CLASS I, ANAEROBIC"/>
    <property type="match status" value="1"/>
</dbReference>
<dbReference type="PANTHER" id="PTHR30389">
    <property type="entry name" value="FUMARATE HYDRATASE-RELATED"/>
    <property type="match status" value="1"/>
</dbReference>
<dbReference type="Pfam" id="PF05681">
    <property type="entry name" value="Fumerase"/>
    <property type="match status" value="1"/>
</dbReference>
<dbReference type="Pfam" id="PF05683">
    <property type="entry name" value="Fumerase_C"/>
    <property type="match status" value="1"/>
</dbReference>
<dbReference type="PIRSF" id="PIRSF001394">
    <property type="entry name" value="Fe_dep_fumar_hy"/>
    <property type="match status" value="1"/>
</dbReference>
<dbReference type="SUPFAM" id="SSF117457">
    <property type="entry name" value="FumA C-terminal domain-like"/>
    <property type="match status" value="1"/>
</dbReference>
<dbReference type="PROSITE" id="PS00163">
    <property type="entry name" value="FUMARATE_LYASES"/>
    <property type="match status" value="1"/>
</dbReference>
<gene>
    <name evidence="8" type="primary">fumB</name>
    <name type="ordered locus">b4122</name>
    <name type="ordered locus">JW4083</name>
</gene>
<feature type="chain" id="PRO_0000195660" description="Fumarate hydratase class I, anaerobic">
    <location>
        <begin position="1"/>
        <end position="548"/>
    </location>
</feature>
<feature type="binding site" evidence="1">
    <location>
        <position position="105"/>
    </location>
    <ligand>
        <name>[4Fe-4S] cluster</name>
        <dbReference type="ChEBI" id="CHEBI:49883"/>
    </ligand>
</feature>
<feature type="binding site" evidence="1">
    <location>
        <position position="224"/>
    </location>
    <ligand>
        <name>[4Fe-4S] cluster</name>
        <dbReference type="ChEBI" id="CHEBI:49883"/>
    </ligand>
</feature>
<feature type="binding site" evidence="1">
    <location>
        <position position="318"/>
    </location>
    <ligand>
        <name>[4Fe-4S] cluster</name>
        <dbReference type="ChEBI" id="CHEBI:49883"/>
    </ligand>
</feature>
<feature type="modified residue" description="N6-acetyllysine" evidence="3">
    <location>
        <position position="192"/>
    </location>
</feature>
<feature type="sequence conflict" description="In Ref. 1; AAA23827." evidence="10" ref="1">
    <original>L</original>
    <variation>V</variation>
    <location>
        <position position="50"/>
    </location>
</feature>
<organism>
    <name type="scientific">Escherichia coli (strain K12)</name>
    <dbReference type="NCBI Taxonomy" id="83333"/>
    <lineage>
        <taxon>Bacteria</taxon>
        <taxon>Pseudomonadati</taxon>
        <taxon>Pseudomonadota</taxon>
        <taxon>Gammaproteobacteria</taxon>
        <taxon>Enterobacterales</taxon>
        <taxon>Enterobacteriaceae</taxon>
        <taxon>Escherichia</taxon>
    </lineage>
</organism>
<comment type="function">
    <text evidence="2 4 5 6">Catalyzes the reversible hydration of fumarate to (S)-malate. Functions in the generation of fumarate for use as an anaerobic electron acceptor. To a lesser extent, also displays D-tartrate dehydratase activity, but is not able to convert (R)-malate, L-tartrate or meso-tartrate. Is required for anaerobic growth on D-tartrate.</text>
</comment>
<comment type="catalytic activity">
    <reaction evidence="4">
        <text>(S)-malate = fumarate + H2O</text>
        <dbReference type="Rhea" id="RHEA:12460"/>
        <dbReference type="ChEBI" id="CHEBI:15377"/>
        <dbReference type="ChEBI" id="CHEBI:15589"/>
        <dbReference type="ChEBI" id="CHEBI:29806"/>
        <dbReference type="EC" id="4.2.1.2"/>
    </reaction>
</comment>
<comment type="catalytic activity">
    <reaction evidence="4">
        <text>(S,S)-tartrate = oxaloacetate + H2O</text>
        <dbReference type="Rhea" id="RHEA:18289"/>
        <dbReference type="ChEBI" id="CHEBI:15377"/>
        <dbReference type="ChEBI" id="CHEBI:16452"/>
        <dbReference type="ChEBI" id="CHEBI:30927"/>
        <dbReference type="EC" id="4.2.1.81"/>
    </reaction>
</comment>
<comment type="cofactor">
    <cofactor evidence="4">
        <name>[4Fe-4S] cluster</name>
        <dbReference type="ChEBI" id="CHEBI:49883"/>
    </cofactor>
    <text evidence="4">Binds 1 [4Fe-4S] cluster.</text>
</comment>
<comment type="biophysicochemical properties">
    <kinetics>
        <KM evidence="4">300 uM for (S)-malate</KM>
        <KM evidence="4">320 uM for fumarate</KM>
        <KM evidence="4">800 uM for D-tartrate</KM>
        <Vmax evidence="4">490.0 umol/min/mg enzyme for (S)-malate dehydration</Vmax>
        <Vmax evidence="4">1430.0 umol/min/mg enzyme for fumarate hydration</Vmax>
        <Vmax evidence="4">9.2 umol/min/mg enzyme for D-tartrate dehydration</Vmax>
    </kinetics>
</comment>
<comment type="subunit">
    <text evidence="4 5">Homodimer.</text>
</comment>
<comment type="induction">
    <text evidence="6">Is mainly expressed during anaerobic growth. Is under the control of the Fnr transcriptional regulator.</text>
</comment>
<comment type="disruption phenotype">
    <text evidence="2">Disruption of this gene seriously impairs growth under anaerobic conditions on D-tartrate when glycerol is supplied as an electron donor (D-tartrate fermentation). Cells lacking this gene also lose most (about 79%) of D-tartrate dehydratase activity.</text>
</comment>
<comment type="similarity">
    <text evidence="10">Belongs to the class-I fumarase family.</text>
</comment>
<name>FUMB_ECOLI</name>